<comment type="function">
    <text evidence="1">This protein binds to the 23S rRNA, and is important in its secondary structure. It is located near the subunit interface in the base of the L7/L12 stalk, and near the tRNA binding site of the peptidyltransferase center.</text>
</comment>
<comment type="subunit">
    <text evidence="1">Part of the 50S ribosomal subunit.</text>
</comment>
<comment type="similarity">
    <text evidence="1">Belongs to the universal ribosomal protein uL6 family.</text>
</comment>
<keyword id="KW-1185">Reference proteome</keyword>
<keyword id="KW-0687">Ribonucleoprotein</keyword>
<keyword id="KW-0689">Ribosomal protein</keyword>
<keyword id="KW-0694">RNA-binding</keyword>
<keyword id="KW-0699">rRNA-binding</keyword>
<feature type="chain" id="PRO_1000087061" description="Large ribosomal subunit protein uL6">
    <location>
        <begin position="1"/>
        <end position="177"/>
    </location>
</feature>
<organism>
    <name type="scientific">Salmonella arizonae (strain ATCC BAA-731 / CDC346-86 / RSK2980)</name>
    <dbReference type="NCBI Taxonomy" id="41514"/>
    <lineage>
        <taxon>Bacteria</taxon>
        <taxon>Pseudomonadati</taxon>
        <taxon>Pseudomonadota</taxon>
        <taxon>Gammaproteobacteria</taxon>
        <taxon>Enterobacterales</taxon>
        <taxon>Enterobacteriaceae</taxon>
        <taxon>Salmonella</taxon>
    </lineage>
</organism>
<gene>
    <name evidence="1" type="primary">rplF</name>
    <name type="ordered locus">SARI_04204</name>
</gene>
<protein>
    <recommendedName>
        <fullName evidence="1">Large ribosomal subunit protein uL6</fullName>
    </recommendedName>
    <alternativeName>
        <fullName evidence="2">50S ribosomal protein L6</fullName>
    </alternativeName>
</protein>
<proteinExistence type="inferred from homology"/>
<evidence type="ECO:0000255" key="1">
    <source>
        <dbReference type="HAMAP-Rule" id="MF_01365"/>
    </source>
</evidence>
<evidence type="ECO:0000305" key="2"/>
<reference key="1">
    <citation type="submission" date="2007-11" db="EMBL/GenBank/DDBJ databases">
        <authorList>
            <consortium name="The Salmonella enterica serovar Arizonae Genome Sequencing Project"/>
            <person name="McClelland M."/>
            <person name="Sanderson E.K."/>
            <person name="Porwollik S."/>
            <person name="Spieth J."/>
            <person name="Clifton W.S."/>
            <person name="Fulton R."/>
            <person name="Chunyan W."/>
            <person name="Wollam A."/>
            <person name="Shah N."/>
            <person name="Pepin K."/>
            <person name="Bhonagiri V."/>
            <person name="Nash W."/>
            <person name="Johnson M."/>
            <person name="Thiruvilangam P."/>
            <person name="Wilson R."/>
        </authorList>
    </citation>
    <scope>NUCLEOTIDE SEQUENCE [LARGE SCALE GENOMIC DNA]</scope>
    <source>
        <strain>ATCC BAA-731 / CDC346-86 / RSK2980</strain>
    </source>
</reference>
<sequence length="177" mass="18888">MSRVAKAPVVVPAGVDVKINGQVITIKGKNGELTRTLNDAVEVKHVDNALTFGPRDGYADGWAQAGTARALLNSMVIGVTEGFTKKLQLVGVGYRAAVKGNVVNLSLGFSHPVDHQLPAGITAECPTQTEIVLKGADKQVIGQVAADLRAYRRPEPYKGKGVRYADEVVRTKEAKKK</sequence>
<dbReference type="EMBL" id="CP000880">
    <property type="protein sequence ID" value="ABX23993.1"/>
    <property type="molecule type" value="Genomic_DNA"/>
</dbReference>
<dbReference type="SMR" id="A9MN63"/>
<dbReference type="STRING" id="41514.SARI_04204"/>
<dbReference type="KEGG" id="ses:SARI_04204"/>
<dbReference type="HOGENOM" id="CLU_065464_1_2_6"/>
<dbReference type="Proteomes" id="UP000002084">
    <property type="component" value="Chromosome"/>
</dbReference>
<dbReference type="GO" id="GO:0022625">
    <property type="term" value="C:cytosolic large ribosomal subunit"/>
    <property type="evidence" value="ECO:0007669"/>
    <property type="project" value="TreeGrafter"/>
</dbReference>
<dbReference type="GO" id="GO:0019843">
    <property type="term" value="F:rRNA binding"/>
    <property type="evidence" value="ECO:0007669"/>
    <property type="project" value="UniProtKB-UniRule"/>
</dbReference>
<dbReference type="GO" id="GO:0003735">
    <property type="term" value="F:structural constituent of ribosome"/>
    <property type="evidence" value="ECO:0007669"/>
    <property type="project" value="InterPro"/>
</dbReference>
<dbReference type="GO" id="GO:0002181">
    <property type="term" value="P:cytoplasmic translation"/>
    <property type="evidence" value="ECO:0007669"/>
    <property type="project" value="TreeGrafter"/>
</dbReference>
<dbReference type="FunFam" id="3.90.930.12:FF:000001">
    <property type="entry name" value="50S ribosomal protein L6"/>
    <property type="match status" value="1"/>
</dbReference>
<dbReference type="FunFam" id="3.90.930.12:FF:000002">
    <property type="entry name" value="50S ribosomal protein L6"/>
    <property type="match status" value="1"/>
</dbReference>
<dbReference type="Gene3D" id="3.90.930.12">
    <property type="entry name" value="Ribosomal protein L6, alpha-beta domain"/>
    <property type="match status" value="2"/>
</dbReference>
<dbReference type="HAMAP" id="MF_01365_B">
    <property type="entry name" value="Ribosomal_uL6_B"/>
    <property type="match status" value="1"/>
</dbReference>
<dbReference type="InterPro" id="IPR000702">
    <property type="entry name" value="Ribosomal_uL6-like"/>
</dbReference>
<dbReference type="InterPro" id="IPR036789">
    <property type="entry name" value="Ribosomal_uL6-like_a/b-dom_sf"/>
</dbReference>
<dbReference type="InterPro" id="IPR020040">
    <property type="entry name" value="Ribosomal_uL6_a/b-dom"/>
</dbReference>
<dbReference type="InterPro" id="IPR019906">
    <property type="entry name" value="Ribosomal_uL6_bac-type"/>
</dbReference>
<dbReference type="InterPro" id="IPR002358">
    <property type="entry name" value="Ribosomal_uL6_CS"/>
</dbReference>
<dbReference type="NCBIfam" id="TIGR03654">
    <property type="entry name" value="L6_bact"/>
    <property type="match status" value="1"/>
</dbReference>
<dbReference type="PANTHER" id="PTHR11655">
    <property type="entry name" value="60S/50S RIBOSOMAL PROTEIN L6/L9"/>
    <property type="match status" value="1"/>
</dbReference>
<dbReference type="PANTHER" id="PTHR11655:SF14">
    <property type="entry name" value="LARGE RIBOSOMAL SUBUNIT PROTEIN UL6M"/>
    <property type="match status" value="1"/>
</dbReference>
<dbReference type="Pfam" id="PF00347">
    <property type="entry name" value="Ribosomal_L6"/>
    <property type="match status" value="2"/>
</dbReference>
<dbReference type="PIRSF" id="PIRSF002162">
    <property type="entry name" value="Ribosomal_L6"/>
    <property type="match status" value="1"/>
</dbReference>
<dbReference type="PRINTS" id="PR00059">
    <property type="entry name" value="RIBOSOMALL6"/>
</dbReference>
<dbReference type="SUPFAM" id="SSF56053">
    <property type="entry name" value="Ribosomal protein L6"/>
    <property type="match status" value="2"/>
</dbReference>
<dbReference type="PROSITE" id="PS00525">
    <property type="entry name" value="RIBOSOMAL_L6_1"/>
    <property type="match status" value="1"/>
</dbReference>
<accession>A9MN63</accession>
<name>RL6_SALAR</name>